<organism>
    <name type="scientific">Shigella dysenteriae serotype 1 (strain Sd197)</name>
    <dbReference type="NCBI Taxonomy" id="300267"/>
    <lineage>
        <taxon>Bacteria</taxon>
        <taxon>Pseudomonadati</taxon>
        <taxon>Pseudomonadota</taxon>
        <taxon>Gammaproteobacteria</taxon>
        <taxon>Enterobacterales</taxon>
        <taxon>Enterobacteriaceae</taxon>
        <taxon>Shigella</taxon>
    </lineage>
</organism>
<keyword id="KW-1185">Reference proteome</keyword>
<keyword id="KW-0687">Ribonucleoprotein</keyword>
<keyword id="KW-0689">Ribosomal protein</keyword>
<name>RL29_SHIDS</name>
<reference key="1">
    <citation type="journal article" date="2005" name="Nucleic Acids Res.">
        <title>Genome dynamics and diversity of Shigella species, the etiologic agents of bacillary dysentery.</title>
        <authorList>
            <person name="Yang F."/>
            <person name="Yang J."/>
            <person name="Zhang X."/>
            <person name="Chen L."/>
            <person name="Jiang Y."/>
            <person name="Yan Y."/>
            <person name="Tang X."/>
            <person name="Wang J."/>
            <person name="Xiong Z."/>
            <person name="Dong J."/>
            <person name="Xue Y."/>
            <person name="Zhu Y."/>
            <person name="Xu X."/>
            <person name="Sun L."/>
            <person name="Chen S."/>
            <person name="Nie H."/>
            <person name="Peng J."/>
            <person name="Xu J."/>
            <person name="Wang Y."/>
            <person name="Yuan Z."/>
            <person name="Wen Y."/>
            <person name="Yao Z."/>
            <person name="Shen Y."/>
            <person name="Qiang B."/>
            <person name="Hou Y."/>
            <person name="Yu J."/>
            <person name="Jin Q."/>
        </authorList>
    </citation>
    <scope>NUCLEOTIDE SEQUENCE [LARGE SCALE GENOMIC DNA]</scope>
    <source>
        <strain>Sd197</strain>
    </source>
</reference>
<feature type="chain" id="PRO_1000007607" description="Large ribosomal subunit protein uL29">
    <location>
        <begin position="1"/>
        <end position="63"/>
    </location>
</feature>
<evidence type="ECO:0000255" key="1">
    <source>
        <dbReference type="HAMAP-Rule" id="MF_00374"/>
    </source>
</evidence>
<evidence type="ECO:0000305" key="2"/>
<sequence length="63" mass="7302">MKAKELREKSVEELNTELLNLLREQFNLRMQVASGQLQQSHLLKQVRRDVARVKTLLNEKAGA</sequence>
<dbReference type="EMBL" id="CP000034">
    <property type="protein sequence ID" value="ABB63466.1"/>
    <property type="molecule type" value="Genomic_DNA"/>
</dbReference>
<dbReference type="RefSeq" id="WP_000644743.1">
    <property type="nucleotide sequence ID" value="NC_007606.1"/>
</dbReference>
<dbReference type="RefSeq" id="YP_404957.1">
    <property type="nucleotide sequence ID" value="NC_007606.1"/>
</dbReference>
<dbReference type="SMR" id="Q32B39"/>
<dbReference type="STRING" id="300267.SDY_3488"/>
<dbReference type="EnsemblBacteria" id="ABB63466">
    <property type="protein sequence ID" value="ABB63466"/>
    <property type="gene ID" value="SDY_3488"/>
</dbReference>
<dbReference type="KEGG" id="sdy:SDY_3488"/>
<dbReference type="PATRIC" id="fig|300267.13.peg.4141"/>
<dbReference type="HOGENOM" id="CLU_158491_1_2_6"/>
<dbReference type="Proteomes" id="UP000002716">
    <property type="component" value="Chromosome"/>
</dbReference>
<dbReference type="GO" id="GO:0022625">
    <property type="term" value="C:cytosolic large ribosomal subunit"/>
    <property type="evidence" value="ECO:0007669"/>
    <property type="project" value="TreeGrafter"/>
</dbReference>
<dbReference type="GO" id="GO:0003735">
    <property type="term" value="F:structural constituent of ribosome"/>
    <property type="evidence" value="ECO:0007669"/>
    <property type="project" value="InterPro"/>
</dbReference>
<dbReference type="GO" id="GO:0006412">
    <property type="term" value="P:translation"/>
    <property type="evidence" value="ECO:0007669"/>
    <property type="project" value="UniProtKB-UniRule"/>
</dbReference>
<dbReference type="CDD" id="cd00427">
    <property type="entry name" value="Ribosomal_L29_HIP"/>
    <property type="match status" value="1"/>
</dbReference>
<dbReference type="FunFam" id="1.10.287.310:FF:000001">
    <property type="entry name" value="50S ribosomal protein L29"/>
    <property type="match status" value="1"/>
</dbReference>
<dbReference type="Gene3D" id="1.10.287.310">
    <property type="match status" value="1"/>
</dbReference>
<dbReference type="HAMAP" id="MF_00374">
    <property type="entry name" value="Ribosomal_uL29"/>
    <property type="match status" value="1"/>
</dbReference>
<dbReference type="InterPro" id="IPR050063">
    <property type="entry name" value="Ribosomal_protein_uL29"/>
</dbReference>
<dbReference type="InterPro" id="IPR001854">
    <property type="entry name" value="Ribosomal_uL29"/>
</dbReference>
<dbReference type="InterPro" id="IPR018254">
    <property type="entry name" value="Ribosomal_uL29_CS"/>
</dbReference>
<dbReference type="InterPro" id="IPR036049">
    <property type="entry name" value="Ribosomal_uL29_sf"/>
</dbReference>
<dbReference type="NCBIfam" id="TIGR00012">
    <property type="entry name" value="L29"/>
    <property type="match status" value="1"/>
</dbReference>
<dbReference type="PANTHER" id="PTHR10916">
    <property type="entry name" value="60S RIBOSOMAL PROTEIN L35/50S RIBOSOMAL PROTEIN L29"/>
    <property type="match status" value="1"/>
</dbReference>
<dbReference type="PANTHER" id="PTHR10916:SF0">
    <property type="entry name" value="LARGE RIBOSOMAL SUBUNIT PROTEIN UL29C"/>
    <property type="match status" value="1"/>
</dbReference>
<dbReference type="Pfam" id="PF00831">
    <property type="entry name" value="Ribosomal_L29"/>
    <property type="match status" value="1"/>
</dbReference>
<dbReference type="SUPFAM" id="SSF46561">
    <property type="entry name" value="Ribosomal protein L29 (L29p)"/>
    <property type="match status" value="1"/>
</dbReference>
<dbReference type="PROSITE" id="PS00579">
    <property type="entry name" value="RIBOSOMAL_L29"/>
    <property type="match status" value="1"/>
</dbReference>
<accession>Q32B39</accession>
<proteinExistence type="inferred from homology"/>
<gene>
    <name evidence="1" type="primary">rpmC</name>
    <name type="ordered locus">SDY_3488</name>
</gene>
<protein>
    <recommendedName>
        <fullName evidence="1">Large ribosomal subunit protein uL29</fullName>
    </recommendedName>
    <alternativeName>
        <fullName evidence="2">50S ribosomal protein L29</fullName>
    </alternativeName>
</protein>
<comment type="similarity">
    <text evidence="1">Belongs to the universal ribosomal protein uL29 family.</text>
</comment>